<evidence type="ECO:0000250" key="1"/>
<evidence type="ECO:0000250" key="2">
    <source>
        <dbReference type="UniProtKB" id="P03206"/>
    </source>
</evidence>
<evidence type="ECO:0000256" key="3">
    <source>
        <dbReference type="SAM" id="MobiDB-lite"/>
    </source>
</evidence>
<evidence type="ECO:0000305" key="4"/>
<evidence type="ECO:0007829" key="5">
    <source>
        <dbReference type="PDB" id="4JRX"/>
    </source>
</evidence>
<dbReference type="EMBL" id="AY961628">
    <property type="protein sequence ID" value="ABA06392.1"/>
    <property type="molecule type" value="Genomic_DNA"/>
</dbReference>
<dbReference type="EMBL" id="EU340364">
    <property type="protein sequence ID" value="ABY56265.1"/>
    <property type="molecule type" value="mRNA"/>
</dbReference>
<dbReference type="EMBL" id="EU340365">
    <property type="protein sequence ID" value="ABY56266.1"/>
    <property type="molecule type" value="mRNA"/>
</dbReference>
<dbReference type="EMBL" id="EU340366">
    <property type="protein sequence ID" value="ABY56267.1"/>
    <property type="molecule type" value="mRNA"/>
</dbReference>
<dbReference type="EMBL" id="EU340367">
    <property type="protein sequence ID" value="ABY56268.1"/>
    <property type="molecule type" value="mRNA"/>
</dbReference>
<dbReference type="EMBL" id="EU340368">
    <property type="protein sequence ID" value="ABY56269.1"/>
    <property type="molecule type" value="mRNA"/>
</dbReference>
<dbReference type="PDB" id="4JQV">
    <property type="method" value="X-ray"/>
    <property type="resolution" value="1.50 A"/>
    <property type="chains" value="B=173-180"/>
</dbReference>
<dbReference type="PDB" id="4JQX">
    <property type="method" value="X-ray"/>
    <property type="resolution" value="1.90 A"/>
    <property type="chains" value="B=169-180"/>
</dbReference>
<dbReference type="PDB" id="4JRX">
    <property type="method" value="X-ray"/>
    <property type="resolution" value="2.30 A"/>
    <property type="chains" value="C=52-64"/>
</dbReference>
<dbReference type="PDB" id="4JRY">
    <property type="method" value="X-ray"/>
    <property type="resolution" value="2.80 A"/>
    <property type="chains" value="C=52-64"/>
</dbReference>
<dbReference type="PDBsum" id="4JQV"/>
<dbReference type="PDBsum" id="4JQX"/>
<dbReference type="PDBsum" id="4JRX"/>
<dbReference type="PDBsum" id="4JRY"/>
<dbReference type="SMR" id="Q3KSS8"/>
<dbReference type="EvolutionaryTrace" id="Q3KSS8"/>
<dbReference type="Proteomes" id="UP000007641">
    <property type="component" value="Genome"/>
</dbReference>
<dbReference type="GO" id="GO:0042025">
    <property type="term" value="C:host cell nucleus"/>
    <property type="evidence" value="ECO:0007669"/>
    <property type="project" value="UniProtKB-SubCell"/>
</dbReference>
<dbReference type="GO" id="GO:0003677">
    <property type="term" value="F:DNA binding"/>
    <property type="evidence" value="ECO:0007669"/>
    <property type="project" value="UniProtKB-KW"/>
</dbReference>
<dbReference type="GO" id="GO:0003700">
    <property type="term" value="F:DNA-binding transcription factor activity"/>
    <property type="evidence" value="ECO:0007669"/>
    <property type="project" value="InterPro"/>
</dbReference>
<dbReference type="GO" id="GO:0039646">
    <property type="term" value="P:symbiont-mediated perturbation of host cell cycle G0/G1 transition checkpoint"/>
    <property type="evidence" value="ECO:0007669"/>
    <property type="project" value="UniProtKB-KW"/>
</dbReference>
<dbReference type="GO" id="GO:0044071">
    <property type="term" value="P:symbiont-mediated perturbation of host cell cycle progression"/>
    <property type="evidence" value="ECO:0007669"/>
    <property type="project" value="UniProtKB-KW"/>
</dbReference>
<dbReference type="CDD" id="cd14809">
    <property type="entry name" value="bZIP_AUREO-like"/>
    <property type="match status" value="1"/>
</dbReference>
<dbReference type="Gene3D" id="1.20.5.170">
    <property type="match status" value="1"/>
</dbReference>
<dbReference type="InterPro" id="IPR004827">
    <property type="entry name" value="bZIP"/>
</dbReference>
<dbReference type="InterPro" id="IPR046347">
    <property type="entry name" value="bZIP_sf"/>
</dbReference>
<dbReference type="InterPro" id="IPR017339">
    <property type="entry name" value="BZLF1_HHV-4"/>
</dbReference>
<dbReference type="PIRSF" id="PIRSF037966">
    <property type="entry name" value="BZLF1"/>
    <property type="match status" value="1"/>
</dbReference>
<dbReference type="SUPFAM" id="SSF57959">
    <property type="entry name" value="Leucine zipper domain"/>
    <property type="match status" value="1"/>
</dbReference>
<dbReference type="PROSITE" id="PS00036">
    <property type="entry name" value="BZIP_BASIC"/>
    <property type="match status" value="1"/>
</dbReference>
<sequence length="245" mass="26813">MMDPNSTSEDVKFTPDPYQVPFVQAFDQATRVYQDLGGPSQAPLPCVLWPVLPEPLPQGQLTAYHVSAAPTGSWFPAPQPAPENAYQAYAAPQLFPVSDITQNQLTNQAGGEAPQPGDNSTVQPAAAVVLACPGANQEQQLADIGAPQPAPAAAPARRTRKPLQPESLEECDSELEIKRYKNRVASRKCRAKFKHLLQHYREVASAKSSENDRLRLLLKQMCPSLDVDSIIPRTPDVLHEDLLNF</sequence>
<organismHost>
    <name type="scientific">Homo sapiens</name>
    <name type="common">Human</name>
    <dbReference type="NCBI Taxonomy" id="9606"/>
</organismHost>
<protein>
    <recommendedName>
        <fullName>Lytic switch protein BZLF1</fullName>
        <shortName>EB1</shortName>
    </recommendedName>
    <alternativeName>
        <fullName>Protein Z</fullName>
    </alternativeName>
    <alternativeName>
        <fullName>Trans-activator protein BZLF1</fullName>
    </alternativeName>
    <alternativeName>
        <fullName>Zebra</fullName>
    </alternativeName>
    <alternativeName>
        <fullName>Zta</fullName>
    </alternativeName>
    <alternativeName>
        <fullName>bZIP transcription factor ZEBRA</fullName>
    </alternativeName>
</protein>
<accession>Q3KSS8</accession>
<accession>B0FNC8</accession>
<accession>B0FNC9</accession>
<accession>B0FND0</accession>
<accession>B0FND1</accession>
<feature type="chain" id="PRO_0000408268" description="Lytic switch protein BZLF1">
    <location>
        <begin position="1"/>
        <end position="245"/>
    </location>
</feature>
<feature type="domain" description="bZIP">
    <location>
        <begin position="178"/>
        <end position="228"/>
    </location>
</feature>
<feature type="region of interest" description="Transactivation" evidence="2">
    <location>
        <begin position="1"/>
        <end position="167"/>
    </location>
</feature>
<feature type="region of interest" description="Disordered" evidence="3">
    <location>
        <begin position="145"/>
        <end position="167"/>
    </location>
</feature>
<feature type="region of interest" description="Basic motif" evidence="1">
    <location>
        <begin position="178"/>
        <end position="195"/>
    </location>
</feature>
<feature type="region of interest" description="Leucine-zipper" evidence="1">
    <location>
        <begin position="196"/>
        <end position="228"/>
    </location>
</feature>
<feature type="region of interest" description="Accessory activation domain" evidence="2">
    <location>
        <begin position="229"/>
        <end position="245"/>
    </location>
</feature>
<feature type="short sequence motif" description="Bipartite nuclear localization signal" evidence="2">
    <location>
        <begin position="157"/>
        <end position="194"/>
    </location>
</feature>
<feature type="site" description="Recognition of methylation, required for disruption of latency" evidence="2">
    <location>
        <position position="186"/>
    </location>
</feature>
<feature type="site" description="Recognition of methylation" evidence="2">
    <location>
        <position position="190"/>
    </location>
</feature>
<feature type="modified residue" description="Phosphothreonine" evidence="2">
    <location>
        <position position="14"/>
    </location>
</feature>
<feature type="modified residue" description="Phosphothreonine" evidence="2">
    <location>
        <position position="159"/>
    </location>
</feature>
<feature type="modified residue" description="Phosphoserine" evidence="2">
    <location>
        <position position="167"/>
    </location>
</feature>
<feature type="modified residue" description="Phosphoserine" evidence="2">
    <location>
        <position position="173"/>
    </location>
</feature>
<feature type="modified residue" description="Phosphoserine" evidence="2">
    <location>
        <position position="186"/>
    </location>
</feature>
<feature type="sequence variant" description="In strain: isolate Human/China/NPC2/2007, isolate Human/China/NPC3/2007.">
    <original>V</original>
    <variation>A</variation>
    <location>
        <position position="11"/>
    </location>
</feature>
<feature type="sequence variant" description="In strain: isolate Human/China/NPC3/2007.">
    <original>R</original>
    <variation>G</variation>
    <location>
        <position position="31"/>
    </location>
</feature>
<feature type="sequence variant" description="In strain: isolate Human/China/NPC2/2007.">
    <original>E</original>
    <variation>G</variation>
    <location>
        <position position="83"/>
    </location>
</feature>
<feature type="sequence variant" description="In strain: isolate Human/China/NPC3/2007.">
    <original>N</original>
    <variation>D</variation>
    <location>
        <position position="103"/>
    </location>
</feature>
<feature type="sequence variant" description="In strain: isolate Human/China/NPC2/2007.">
    <original>Q</original>
    <variation>L</variation>
    <location>
        <position position="108"/>
    </location>
</feature>
<feature type="sequence variant" description="In strain: isolate Human/China/NPC2/2007.">
    <original>Q</original>
    <variation>R</variation>
    <location>
        <position position="123"/>
    </location>
</feature>
<feature type="sequence variant" description="In strain: isolate Human/China/NPC3/2007.">
    <original>A</original>
    <variation>V</variation>
    <location>
        <position position="127"/>
    </location>
</feature>
<feature type="sequence variant" description="In strain: isolate Human/China/NPC3/2007.">
    <original>P</original>
    <variation>L</variation>
    <location>
        <position position="155"/>
    </location>
</feature>
<feature type="sequence variant" description="In strain: isolate Human/China/NPC1/2007 and isolate Human/China/NPC3/2007.">
    <original>K</original>
    <variation>R</variation>
    <location>
        <position position="181"/>
    </location>
</feature>
<feature type="sequence variant" description="In strain: isolate Human/China/NPC4/2007.">
    <original>Y</original>
    <variation>C</variation>
    <location>
        <position position="200"/>
    </location>
</feature>
<feature type="strand" evidence="5">
    <location>
        <begin position="57"/>
        <end position="59"/>
    </location>
</feature>
<proteinExistence type="evidence at protein level"/>
<keyword id="KW-0002">3D-structure</keyword>
<keyword id="KW-0238">DNA-binding</keyword>
<keyword id="KW-0244">Early protein</keyword>
<keyword id="KW-1077">G0/G1 host cell cycle checkpoint dysregulation by virus</keyword>
<keyword id="KW-1048">Host nucleus</keyword>
<keyword id="KW-0945">Host-virus interaction</keyword>
<keyword id="KW-1121">Modulation of host cell cycle by virus</keyword>
<keyword id="KW-0597">Phosphoprotein</keyword>
<keyword id="KW-0804">Transcription</keyword>
<keyword id="KW-0805">Transcription regulation</keyword>
<name>BZLF1_EBVG</name>
<reference key="1">
    <citation type="journal article" date="2005" name="J. Virol.">
        <title>Genomic sequence analysis of Epstein-Barr virus strain GD1 from a nasopharyngeal carcinoma patient.</title>
        <authorList>
            <person name="Zeng M.-S."/>
            <person name="Li D.-J."/>
            <person name="Liu Q.-L."/>
            <person name="Song L.-B."/>
            <person name="Li M.-Z."/>
            <person name="Zhang R.-H."/>
            <person name="Yu X.-J."/>
            <person name="Wang H.-M."/>
            <person name="Ernberg I."/>
            <person name="Zeng Y.-X."/>
        </authorList>
    </citation>
    <scope>NUCLEOTIDE SEQUENCE [LARGE SCALE GENOMIC DNA]</scope>
</reference>
<reference key="2">
    <citation type="journal article" date="2008" name="Arch. Virol.">
        <title>New BZLF1 sequence variations in EBV-associated undifferentiated nasopharyngeal carcinoma in southern China.</title>
        <authorList>
            <person name="Ji K.-M."/>
            <person name="Li C.-L."/>
            <person name="Meng G."/>
            <person name="Han A.-D."/>
            <person name="Wu X.-L."/>
        </authorList>
    </citation>
    <scope>NUCLEOTIDE SEQUENCE [MRNA]</scope>
    <source>
        <strain>isolate Human/China/NPC1/2007</strain>
        <strain>isolate Human/China/NPC2/2007</strain>
        <strain>isolate Human/China/NPC3/2007</strain>
        <strain>isolate Human/China/NPC4/2007</strain>
    </source>
</reference>
<organism>
    <name type="scientific">Epstein-Barr virus (strain GD1)</name>
    <name type="common">HHV-4</name>
    <name type="synonym">Human gammaherpesvirus 4</name>
    <dbReference type="NCBI Taxonomy" id="10376"/>
    <lineage>
        <taxon>Viruses</taxon>
        <taxon>Duplodnaviria</taxon>
        <taxon>Heunggongvirae</taxon>
        <taxon>Peploviricota</taxon>
        <taxon>Herviviricetes</taxon>
        <taxon>Herpesvirales</taxon>
        <taxon>Orthoherpesviridae</taxon>
        <taxon>Gammaherpesvirinae</taxon>
        <taxon>Lymphocryptovirus</taxon>
        <taxon>Lymphocryptovirus humangamma4</taxon>
    </lineage>
</organism>
<comment type="function">
    <text evidence="2">Transcription factor that acts as a molecular switch to induce the transition from the latent to the lytic or productive phase of the virus cycle. Mediates the switch from the latent to the lytic cycle of infection in cells containing a highly methylated viral genome. Probably binds to silenced chromatin and recruits host chromatin-remodeling enzymes. Regulates this switch by binding to 2 types of ZEBRA response elements (ZREs): the CpG-free AP-1 like elements (latency) and the methylated CpG-containing elements (lytic replication). Activates preferentially the methylated forms of the viral lytic R (BRLF1) and Na (BRRF1) gene promoters, the latters being the first genes activated during Z-mediated reactivation in latently infected cells. BZLF1 and BRLF1 act together to trigger lytic replication. Also binds the lytic origin of replication, oriLyt. Induces G1 cell cycle arrest by stabilizing the host CCAAT/enhancer binding protein CEBPA. This function is important because the lytic cycle preferentially takes place in host cells arrested in G1.</text>
</comment>
<comment type="subunit">
    <text evidence="2">Homodimer. Interacts (via b-ZIP domain) with the DNA polymerase processivity factor BMRF1 (via N-terminus); this interaction may inhibit BZLF1-induced transcription of the BMRF1 promoter. Interacts with human UBN1, CRTC2 and RACK1. Interacts (via N-terminus) with human PAX5 (via N-terminus); this interaction inhibits BZLF1-mediated lytic viral reactivation. Interacts (via leucine-zipper domain) with host CEBPA; this interaction induces G1 host cell cycle arrest. Interacts (via C-terminus) with host TP53BP1 (via C-terminus); this interaction is involved in the activation of the viral lytic cycle. Interacts with host chromatin-remodeling ATPase INO80; this interaction participates to the activation of early lytic viral genes by BZLF1. Interacts with host regulator of chromatin SMARCA5/hSNF2H; this interaction participates to the activation of early lytic viral genes by BZLF1. Interacts with host PLSCR1/Phospholipid scramblase 1; this interaction negatively regulates the transcriptional regulatory activity of BZLF1 by preventing the formation of the BZLF1-CBP complex.</text>
</comment>
<comment type="subcellular location">
    <subcellularLocation>
        <location evidence="2">Host nucleus</location>
    </subcellularLocation>
</comment>
<comment type="induction">
    <text evidence="4">Expressed in the immediate-early phase of the viral replicative cycle (Probable). It is expressed again during the switch between latency and lytic replication (Probable).</text>
</comment>
<comment type="domain">
    <text evidence="2">Recognizes the CpG methylation marks through a specific serine and a methylcytosine-arginine-guanine triad. The leucine zipper region contributes to homodimerization. The basic motif is involved in specific DNA-binding.</text>
</comment>
<comment type="similarity">
    <text evidence="4">Belongs to the bZIP family.</text>
</comment>
<gene>
    <name type="ORF">BZLF1</name>
</gene>